<accession>P65295</accession>
<accession>Q46932</accession>
<dbReference type="EMBL" id="AE014075">
    <property type="protein sequence ID" value="AAN81873.1"/>
    <property type="molecule type" value="Genomic_DNA"/>
</dbReference>
<dbReference type="RefSeq" id="WP_000758655.1">
    <property type="nucleotide sequence ID" value="NZ_CP051263.1"/>
</dbReference>
<dbReference type="BMRB" id="P65295"/>
<dbReference type="SMR" id="P65295"/>
<dbReference type="STRING" id="199310.c3428"/>
<dbReference type="GeneID" id="93779165"/>
<dbReference type="KEGG" id="ecc:c3428"/>
<dbReference type="eggNOG" id="ENOG50333U0">
    <property type="taxonomic scope" value="Bacteria"/>
</dbReference>
<dbReference type="HOGENOM" id="CLU_182841_0_1_6"/>
<dbReference type="BioCyc" id="ECOL199310:C3428-MONOMER"/>
<dbReference type="Proteomes" id="UP000001410">
    <property type="component" value="Chromosome"/>
</dbReference>
<dbReference type="GO" id="GO:0005886">
    <property type="term" value="C:plasma membrane"/>
    <property type="evidence" value="ECO:0007669"/>
    <property type="project" value="UniProtKB-SubCell"/>
</dbReference>
<dbReference type="Gene3D" id="2.30.30.100">
    <property type="match status" value="1"/>
</dbReference>
<dbReference type="InterPro" id="IPR010920">
    <property type="entry name" value="LSM_dom_sf"/>
</dbReference>
<dbReference type="InterPro" id="IPR010305">
    <property type="entry name" value="YgdI/YgdR-like"/>
</dbReference>
<dbReference type="InterPro" id="IPR047807">
    <property type="entry name" value="YgdI/YgdR-like_SH3-like"/>
</dbReference>
<dbReference type="NCBIfam" id="NF033216">
    <property type="entry name" value="lipo_YgdI_YgdR"/>
    <property type="match status" value="1"/>
</dbReference>
<dbReference type="PANTHER" id="PTHR37011:SF1">
    <property type="entry name" value="POT FAMILY PEPTIDE TRANSPORT PROTEIN"/>
    <property type="match status" value="1"/>
</dbReference>
<dbReference type="PANTHER" id="PTHR37011">
    <property type="entry name" value="POT FAMILY PEPTIDE TRANSPORT PROTEIN-RELATED"/>
    <property type="match status" value="1"/>
</dbReference>
<dbReference type="Pfam" id="PF06004">
    <property type="entry name" value="DUF903"/>
    <property type="match status" value="1"/>
</dbReference>
<dbReference type="SUPFAM" id="SSF50182">
    <property type="entry name" value="Sm-like ribonucleoproteins"/>
    <property type="match status" value="1"/>
</dbReference>
<dbReference type="PROSITE" id="PS51257">
    <property type="entry name" value="PROKAR_LIPOPROTEIN"/>
    <property type="match status" value="1"/>
</dbReference>
<keyword id="KW-1003">Cell membrane</keyword>
<keyword id="KW-0449">Lipoprotein</keyword>
<keyword id="KW-0472">Membrane</keyword>
<keyword id="KW-0564">Palmitate</keyword>
<keyword id="KW-1185">Reference proteome</keyword>
<keyword id="KW-0732">Signal</keyword>
<sequence>MKKWAVIISAVGLAFAVSGCSSDYVMATKDGRMILTDGKPEIDDDTGLVSYHDQQGNAMQINRDDVSQIIER</sequence>
<reference key="1">
    <citation type="journal article" date="2002" name="Proc. Natl. Acad. Sci. U.S.A.">
        <title>Extensive mosaic structure revealed by the complete genome sequence of uropathogenic Escherichia coli.</title>
        <authorList>
            <person name="Welch R.A."/>
            <person name="Burland V."/>
            <person name="Plunkett G. III"/>
            <person name="Redford P."/>
            <person name="Roesch P."/>
            <person name="Rasko D."/>
            <person name="Buckles E.L."/>
            <person name="Liou S.-R."/>
            <person name="Boutin A."/>
            <person name="Hackett J."/>
            <person name="Stroud D."/>
            <person name="Mayhew G.F."/>
            <person name="Rose D.J."/>
            <person name="Zhou S."/>
            <person name="Schwartz D.C."/>
            <person name="Perna N.T."/>
            <person name="Mobley H.L.T."/>
            <person name="Donnenberg M.S."/>
            <person name="Blattner F.R."/>
        </authorList>
    </citation>
    <scope>NUCLEOTIDE SEQUENCE [LARGE SCALE GENOMIC DNA]</scope>
    <source>
        <strain>CFT073 / ATCC 700928 / UPEC</strain>
    </source>
</reference>
<organism>
    <name type="scientific">Escherichia coli O6:H1 (strain CFT073 / ATCC 700928 / UPEC)</name>
    <dbReference type="NCBI Taxonomy" id="199310"/>
    <lineage>
        <taxon>Bacteria</taxon>
        <taxon>Pseudomonadati</taxon>
        <taxon>Pseudomonadota</taxon>
        <taxon>Gammaproteobacteria</taxon>
        <taxon>Enterobacterales</taxon>
        <taxon>Enterobacteriaceae</taxon>
        <taxon>Escherichia</taxon>
    </lineage>
</organism>
<protein>
    <recommendedName>
        <fullName>Uncharacterized lipoprotein YgdR</fullName>
    </recommendedName>
</protein>
<name>YGDR_ECOL6</name>
<comment type="subcellular location">
    <subcellularLocation>
        <location evidence="1">Cell membrane</location>
        <topology evidence="1">Lipid-anchor</topology>
    </subcellularLocation>
</comment>
<comment type="similarity">
    <text evidence="2">To E.coli YgdI.</text>
</comment>
<proteinExistence type="inferred from homology"/>
<evidence type="ECO:0000255" key="1">
    <source>
        <dbReference type="PROSITE-ProRule" id="PRU00303"/>
    </source>
</evidence>
<evidence type="ECO:0000305" key="2"/>
<feature type="signal peptide" evidence="1">
    <location>
        <begin position="1"/>
        <end position="19"/>
    </location>
</feature>
<feature type="chain" id="PRO_0000018051" description="Uncharacterized lipoprotein YgdR">
    <location>
        <begin position="20"/>
        <end position="72"/>
    </location>
</feature>
<feature type="lipid moiety-binding region" description="N-palmitoyl cysteine" evidence="1">
    <location>
        <position position="20"/>
    </location>
</feature>
<feature type="lipid moiety-binding region" description="S-diacylglycerol cysteine" evidence="1">
    <location>
        <position position="20"/>
    </location>
</feature>
<gene>
    <name type="primary">ygdR</name>
    <name type="ordered locus">c3428</name>
</gene>